<name>KRA41_HUMAN</name>
<protein>
    <recommendedName>
        <fullName>Keratin-associated protein 4-1</fullName>
    </recommendedName>
    <alternativeName>
        <fullName>Keratin-associated protein 4-10</fullName>
    </alternativeName>
    <alternativeName>
        <fullName>Keratin-associated protein 4.1</fullName>
    </alternativeName>
    <alternativeName>
        <fullName>Keratin-associated protein 4.10</fullName>
    </alternativeName>
    <alternativeName>
        <fullName>Ultrahigh sulfur keratin-associated protein 4.10</fullName>
    </alternativeName>
</protein>
<accession>Q9BYQ7</accession>
<accession>A8MWS7</accession>
<accession>Q3SYF2</accession>
<reference key="1">
    <citation type="journal article" date="2001" name="J. Biol. Chem.">
        <title>Characterization of a cluster of human high/ultrahigh sulfur keratin-associated protein genes embedded in the type I keratin gene domain on chromosome 17q12-21.</title>
        <authorList>
            <person name="Rogers M.A."/>
            <person name="Langbein L."/>
            <person name="Winter H."/>
            <person name="Ehmann C."/>
            <person name="Praetzel S."/>
            <person name="Korn B."/>
            <person name="Schweizer J."/>
        </authorList>
    </citation>
    <scope>NUCLEOTIDE SEQUENCE [MRNA]</scope>
    <scope>VARIANTS ARG-66 AND THR-134</scope>
    <source>
        <tissue>Scalp</tissue>
    </source>
</reference>
<reference key="2">
    <citation type="journal article" date="2006" name="Nature">
        <title>DNA sequence of human chromosome 17 and analysis of rearrangement in the human lineage.</title>
        <authorList>
            <person name="Zody M.C."/>
            <person name="Garber M."/>
            <person name="Adams D.J."/>
            <person name="Sharpe T."/>
            <person name="Harrow J."/>
            <person name="Lupski J.R."/>
            <person name="Nicholson C."/>
            <person name="Searle S.M."/>
            <person name="Wilming L."/>
            <person name="Young S.K."/>
            <person name="Abouelleil A."/>
            <person name="Allen N.R."/>
            <person name="Bi W."/>
            <person name="Bloom T."/>
            <person name="Borowsky M.L."/>
            <person name="Bugalter B.E."/>
            <person name="Butler J."/>
            <person name="Chang J.L."/>
            <person name="Chen C.-K."/>
            <person name="Cook A."/>
            <person name="Corum B."/>
            <person name="Cuomo C.A."/>
            <person name="de Jong P.J."/>
            <person name="DeCaprio D."/>
            <person name="Dewar K."/>
            <person name="FitzGerald M."/>
            <person name="Gilbert J."/>
            <person name="Gibson R."/>
            <person name="Gnerre S."/>
            <person name="Goldstein S."/>
            <person name="Grafham D.V."/>
            <person name="Grocock R."/>
            <person name="Hafez N."/>
            <person name="Hagopian D.S."/>
            <person name="Hart E."/>
            <person name="Norman C.H."/>
            <person name="Humphray S."/>
            <person name="Jaffe D.B."/>
            <person name="Jones M."/>
            <person name="Kamal M."/>
            <person name="Khodiyar V.K."/>
            <person name="LaButti K."/>
            <person name="Laird G."/>
            <person name="Lehoczky J."/>
            <person name="Liu X."/>
            <person name="Lokyitsang T."/>
            <person name="Loveland J."/>
            <person name="Lui A."/>
            <person name="Macdonald P."/>
            <person name="Major J.E."/>
            <person name="Matthews L."/>
            <person name="Mauceli E."/>
            <person name="McCarroll S.A."/>
            <person name="Mihalev A.H."/>
            <person name="Mudge J."/>
            <person name="Nguyen C."/>
            <person name="Nicol R."/>
            <person name="O'Leary S.B."/>
            <person name="Osoegawa K."/>
            <person name="Schwartz D.C."/>
            <person name="Shaw-Smith C."/>
            <person name="Stankiewicz P."/>
            <person name="Steward C."/>
            <person name="Swarbreck D."/>
            <person name="Venkataraman V."/>
            <person name="Whittaker C.A."/>
            <person name="Yang X."/>
            <person name="Zimmer A.R."/>
            <person name="Bradley A."/>
            <person name="Hubbard T."/>
            <person name="Birren B.W."/>
            <person name="Rogers J."/>
            <person name="Lander E.S."/>
            <person name="Nusbaum C."/>
        </authorList>
    </citation>
    <scope>NUCLEOTIDE SEQUENCE [LARGE SCALE GENOMIC DNA]</scope>
</reference>
<reference key="3">
    <citation type="journal article" date="2004" name="Genome Res.">
        <title>The status, quality, and expansion of the NIH full-length cDNA project: the Mammalian Gene Collection (MGC).</title>
        <authorList>
            <consortium name="The MGC Project Team"/>
        </authorList>
    </citation>
    <scope>NUCLEOTIDE SEQUENCE [LARGE SCALE MRNA]</scope>
    <scope>VARIANTS ARG-66 AND THR-134</scope>
</reference>
<reference key="4">
    <citation type="journal article" date="2005" name="J. Invest. Dermatol.">
        <title>Size polymorphisms in the human ultrahigh sulfur hair keratin-associated protein 4, KAP4, gene family.</title>
        <authorList>
            <person name="Kariya N."/>
            <person name="Shimomura Y."/>
            <person name="Ito M."/>
        </authorList>
    </citation>
    <scope>TISSUE SPECIFICITY</scope>
    <scope>POLYMORPHISM</scope>
    <scope>VARIANT 83-CYS--SER-101 DEL</scope>
    <scope>VARIANTS ARG-66; ARG-115 AND THR-134</scope>
</reference>
<organism>
    <name type="scientific">Homo sapiens</name>
    <name type="common">Human</name>
    <dbReference type="NCBI Taxonomy" id="9606"/>
    <lineage>
        <taxon>Eukaryota</taxon>
        <taxon>Metazoa</taxon>
        <taxon>Chordata</taxon>
        <taxon>Craniata</taxon>
        <taxon>Vertebrata</taxon>
        <taxon>Euteleostomi</taxon>
        <taxon>Mammalia</taxon>
        <taxon>Eutheria</taxon>
        <taxon>Euarchontoglires</taxon>
        <taxon>Primates</taxon>
        <taxon>Haplorrhini</taxon>
        <taxon>Catarrhini</taxon>
        <taxon>Hominidae</taxon>
        <taxon>Homo</taxon>
    </lineage>
</organism>
<evidence type="ECO:0000269" key="1">
    <source>
    </source>
</evidence>
<evidence type="ECO:0000269" key="2">
    <source>
    </source>
</evidence>
<evidence type="ECO:0000269" key="3">
    <source>
    </source>
</evidence>
<evidence type="ECO:0000305" key="4"/>
<comment type="function">
    <text>In the hair cortex, hair keratin intermediate filaments are embedded in an interfilamentous matrix, consisting of hair keratin-associated proteins (KRTAP), which are essential for the formation of a rigid and resistant hair shaft through their extensive disulfide bond cross-linking with abundant cysteine residues of hair keratins. The matrix proteins include the high-sulfur and high-glycine-tyrosine keratins.</text>
</comment>
<comment type="subunit">
    <text>Interacts with hair keratins.</text>
</comment>
<comment type="interaction">
    <interactant intactId="EBI-34579671">
        <id>Q9BYQ7</id>
    </interactant>
    <interactant intactId="EBI-744545">
        <id>Q8NEC5</id>
        <label>CATSPER1</label>
    </interactant>
    <organismsDiffer>false</organismsDiffer>
    <experiments>3</experiments>
</comment>
<comment type="interaction">
    <interactant intactId="EBI-34579671">
        <id>Q9BYQ7</id>
    </interactant>
    <interactant intactId="EBI-713677">
        <id>Q9UGL9</id>
        <label>CRCT1</label>
    </interactant>
    <organismsDiffer>false</organismsDiffer>
    <experiments>3</experiments>
</comment>
<comment type="interaction">
    <interactant intactId="EBI-34579671">
        <id>Q9BYQ7</id>
    </interactant>
    <interactant intactId="EBI-10192698">
        <id>Q02930-3</id>
        <label>CREB5</label>
    </interactant>
    <organismsDiffer>false</organismsDiffer>
    <experiments>3</experiments>
</comment>
<comment type="interaction">
    <interactant intactId="EBI-34579671">
        <id>Q9BYQ7</id>
    </interactant>
    <interactant intactId="EBI-746300">
        <id>Q96LJ7</id>
        <label>DHRS1</label>
    </interactant>
    <organismsDiffer>false</organismsDiffer>
    <experiments>3</experiments>
</comment>
<comment type="interaction">
    <interactant intactId="EBI-34579671">
        <id>Q9BYQ7</id>
    </interactant>
    <interactant intactId="EBI-741068">
        <id>Q969U6</id>
        <label>FBXW5</label>
    </interactant>
    <organismsDiffer>false</organismsDiffer>
    <experiments>3</experiments>
</comment>
<comment type="interaction">
    <interactant intactId="EBI-34579671">
        <id>Q9BYQ7</id>
    </interactant>
    <interactant intactId="EBI-11975289">
        <id>Q9Y223-2</id>
        <label>GNE</label>
    </interactant>
    <organismsDiffer>false</organismsDiffer>
    <experiments>3</experiments>
</comment>
<comment type="interaction">
    <interactant intactId="EBI-34579671">
        <id>Q9BYQ7</id>
    </interactant>
    <interactant intactId="EBI-740785">
        <id>P49639</id>
        <label>HOXA1</label>
    </interactant>
    <organismsDiffer>false</organismsDiffer>
    <experiments>3</experiments>
</comment>
<comment type="interaction">
    <interactant intactId="EBI-34579671">
        <id>Q9BYQ7</id>
    </interactant>
    <interactant intactId="EBI-1031632">
        <id>P22301</id>
        <label>IL10</label>
    </interactant>
    <organismsDiffer>false</organismsDiffer>
    <experiments>3</experiments>
</comment>
<comment type="interaction">
    <interactant intactId="EBI-34579671">
        <id>Q9BYQ7</id>
    </interactant>
    <interactant intactId="EBI-10250562">
        <id>Q6L8G9</id>
        <label>KRTAP5-6</label>
    </interactant>
    <organismsDiffer>false</organismsDiffer>
    <experiments>3</experiments>
</comment>
<comment type="interaction">
    <interactant intactId="EBI-34579671">
        <id>Q9BYQ7</id>
    </interactant>
    <interactant intactId="EBI-1043191">
        <id>Q9BYQ3</id>
        <label>KRTAP9-3</label>
    </interactant>
    <organismsDiffer>false</organismsDiffer>
    <experiments>3</experiments>
</comment>
<comment type="interaction">
    <interactant intactId="EBI-34579671">
        <id>Q9BYQ7</id>
    </interactant>
    <interactant intactId="EBI-11958364">
        <id>Q9BYQ0</id>
        <label>KRTAP9-8</label>
    </interactant>
    <organismsDiffer>false</organismsDiffer>
    <experiments>3</experiments>
</comment>
<comment type="interaction">
    <interactant intactId="EBI-34579671">
        <id>Q9BYQ7</id>
    </interactant>
    <interactant intactId="EBI-10245913">
        <id>Q5T7P3</id>
        <label>LCE1B</label>
    </interactant>
    <organismsDiffer>false</organismsDiffer>
    <experiments>3</experiments>
</comment>
<comment type="interaction">
    <interactant intactId="EBI-34579671">
        <id>Q9BYQ7</id>
    </interactant>
    <interactant intactId="EBI-11741311">
        <id>Q5T752</id>
        <label>LCE1D</label>
    </interactant>
    <organismsDiffer>false</organismsDiffer>
    <experiments>3</experiments>
</comment>
<comment type="interaction">
    <interactant intactId="EBI-34579671">
        <id>Q9BYQ7</id>
    </interactant>
    <interactant intactId="EBI-10246750">
        <id>Q5TA82</id>
        <label>LCE2D</label>
    </interactant>
    <organismsDiffer>false</organismsDiffer>
    <experiments>3</experiments>
</comment>
<comment type="interaction">
    <interactant intactId="EBI-34579671">
        <id>Q9BYQ7</id>
    </interactant>
    <interactant intactId="EBI-9394625">
        <id>Q5TA76</id>
        <label>LCE3A</label>
    </interactant>
    <organismsDiffer>false</organismsDiffer>
    <experiments>3</experiments>
</comment>
<comment type="interaction">
    <interactant intactId="EBI-34579671">
        <id>Q9BYQ7</id>
    </interactant>
    <interactant intactId="EBI-10245291">
        <id>Q5T5A8</id>
        <label>LCE3C</label>
    </interactant>
    <organismsDiffer>false</organismsDiffer>
    <experiments>3</experiments>
</comment>
<comment type="interaction">
    <interactant intactId="EBI-34579671">
        <id>Q9BYQ7</id>
    </interactant>
    <interactant intactId="EBI-6658837">
        <id>Q9BYE3</id>
        <label>LCE3D</label>
    </interactant>
    <organismsDiffer>false</organismsDiffer>
    <experiments>3</experiments>
</comment>
<comment type="interaction">
    <interactant intactId="EBI-34579671">
        <id>Q9BYQ7</id>
    </interactant>
    <interactant intactId="EBI-10245456">
        <id>Q5T5B0</id>
        <label>LCE3E</label>
    </interactant>
    <organismsDiffer>false</organismsDiffer>
    <experiments>3</experiments>
</comment>
<comment type="interaction">
    <interactant intactId="EBI-34579671">
        <id>Q9BYQ7</id>
    </interactant>
    <interactant intactId="EBI-11955689">
        <id>Q5TCM9</id>
        <label>LCE5A</label>
    </interactant>
    <organismsDiffer>false</organismsDiffer>
    <experiments>3</experiments>
</comment>
<comment type="interaction">
    <interactant intactId="EBI-34579671">
        <id>Q9BYQ7</id>
    </interactant>
    <interactant intactId="EBI-12106440">
        <id>Q9NQS3-2</id>
        <label>NECTIN3</label>
    </interactant>
    <organismsDiffer>false</organismsDiffer>
    <experiments>3</experiments>
</comment>
<comment type="interaction">
    <interactant intactId="EBI-34579671">
        <id>Q9BYQ7</id>
    </interactant>
    <interactant intactId="EBI-748927">
        <id>Q9NQX5</id>
        <label>NPDC1</label>
    </interactant>
    <organismsDiffer>false</organismsDiffer>
    <experiments>3</experiments>
</comment>
<comment type="interaction">
    <interactant intactId="EBI-34579671">
        <id>Q9BYQ7</id>
    </interactant>
    <interactant intactId="EBI-1210753">
        <id>Q7Z417</id>
        <label>NUFIP2</label>
    </interactant>
    <organismsDiffer>false</organismsDiffer>
    <experiments>3</experiments>
</comment>
<comment type="interaction">
    <interactant intactId="EBI-34579671">
        <id>Q9BYQ7</id>
    </interactant>
    <interactant intactId="EBI-740446">
        <id>P32242</id>
        <label>OTX1</label>
    </interactant>
    <organismsDiffer>false</organismsDiffer>
    <experiments>3</experiments>
</comment>
<comment type="interaction">
    <interactant intactId="EBI-34579671">
        <id>Q9BYQ7</id>
    </interactant>
    <interactant intactId="EBI-359352">
        <id>P25786</id>
        <label>PSMA1</label>
    </interactant>
    <organismsDiffer>false</organismsDiffer>
    <experiments>3</experiments>
</comment>
<comment type="interaction">
    <interactant intactId="EBI-34579671">
        <id>Q9BYQ7</id>
    </interactant>
    <interactant intactId="EBI-750494">
        <id>P49901</id>
        <label>SMCP</label>
    </interactant>
    <organismsDiffer>false</organismsDiffer>
    <experiments>3</experiments>
</comment>
<comment type="interaction">
    <interactant intactId="EBI-34579671">
        <id>Q9BYQ7</id>
    </interactant>
    <interactant intactId="EBI-10249550">
        <id>Q6EMK4</id>
        <label>VASN</label>
    </interactant>
    <organismsDiffer>false</organismsDiffer>
    <experiments>3</experiments>
</comment>
<comment type="tissue specificity">
    <text evidence="3">Expressed in the hair follicles.</text>
</comment>
<comment type="polymorphism">
    <text evidence="3">Numerous size polymorphism are present in KRTAP4 gene family, which are mainly due to variations in the sequence encoding cysteine-rich repeat segments (PubMed:15955084).</text>
</comment>
<comment type="similarity">
    <text evidence="4">Belongs to the KRTAP type 4 family.</text>
</comment>
<dbReference type="EMBL" id="AJ406942">
    <property type="protein sequence ID" value="CAC27581.1"/>
    <property type="molecule type" value="mRNA"/>
</dbReference>
<dbReference type="EMBL" id="AC006070">
    <property type="status" value="NOT_ANNOTATED_CDS"/>
    <property type="molecule type" value="Genomic_DNA"/>
</dbReference>
<dbReference type="EMBL" id="BC103845">
    <property type="protein sequence ID" value="AAI03846.1"/>
    <property type="molecule type" value="mRNA"/>
</dbReference>
<dbReference type="EMBL" id="BC103846">
    <property type="protein sequence ID" value="AAI03847.1"/>
    <property type="molecule type" value="mRNA"/>
</dbReference>
<dbReference type="CCDS" id="CCDS92305.1"/>
<dbReference type="RefSeq" id="NP_001373770.1">
    <property type="nucleotide sequence ID" value="NM_001386841.1"/>
</dbReference>
<dbReference type="RefSeq" id="NP_149049.1">
    <property type="nucleotide sequence ID" value="NM_033060.2"/>
</dbReference>
<dbReference type="BioGRID" id="124449">
    <property type="interactions" value="30"/>
</dbReference>
<dbReference type="FunCoup" id="Q9BYQ7">
    <property type="interactions" value="22"/>
</dbReference>
<dbReference type="IntAct" id="Q9BYQ7">
    <property type="interactions" value="26"/>
</dbReference>
<dbReference type="STRING" id="9606.ENSP00000381489"/>
<dbReference type="GlyGen" id="Q9BYQ7">
    <property type="glycosylation" value="1 site, 1 O-linked glycan (1 site)"/>
</dbReference>
<dbReference type="BioMuta" id="KRTAP4-1"/>
<dbReference type="DMDM" id="322510119"/>
<dbReference type="MassIVE" id="Q9BYQ7"/>
<dbReference type="PaxDb" id="9606-ENSP00000381489"/>
<dbReference type="PeptideAtlas" id="Q9BYQ7"/>
<dbReference type="ProteomicsDB" id="79687"/>
<dbReference type="DNASU" id="85285"/>
<dbReference type="Ensembl" id="ENST00000398472.2">
    <property type="protein sequence ID" value="ENSP00000381489.1"/>
    <property type="gene ID" value="ENSG00000198443.8"/>
</dbReference>
<dbReference type="GeneID" id="85285"/>
<dbReference type="KEGG" id="hsa:85285"/>
<dbReference type="MANE-Select" id="ENST00000398472.2">
    <property type="protein sequence ID" value="ENSP00000381489.1"/>
    <property type="RefSeq nucleotide sequence ID" value="NM_001386841.1"/>
    <property type="RefSeq protein sequence ID" value="NP_001373770.1"/>
</dbReference>
<dbReference type="UCSC" id="uc060fau.1">
    <property type="organism name" value="human"/>
</dbReference>
<dbReference type="AGR" id="HGNC:18907"/>
<dbReference type="CTD" id="85285"/>
<dbReference type="GeneCards" id="KRTAP4-1"/>
<dbReference type="HGNC" id="HGNC:18907">
    <property type="gene designation" value="KRTAP4-1"/>
</dbReference>
<dbReference type="HPA" id="ENSG00000198443">
    <property type="expression patterns" value="Tissue enhanced (skin)"/>
</dbReference>
<dbReference type="neXtProt" id="NX_Q9BYQ7"/>
<dbReference type="OpenTargets" id="ENSG00000198443"/>
<dbReference type="PharmGKB" id="PA38755"/>
<dbReference type="VEuPathDB" id="HostDB:ENSG00000198443"/>
<dbReference type="eggNOG" id="KOG4726">
    <property type="taxonomic scope" value="Eukaryota"/>
</dbReference>
<dbReference type="GeneTree" id="ENSGT00940000164350"/>
<dbReference type="InParanoid" id="Q9BYQ7"/>
<dbReference type="OMA" id="SPCQESC"/>
<dbReference type="PAN-GO" id="Q9BYQ7">
    <property type="GO annotations" value="0 GO annotations based on evolutionary models"/>
</dbReference>
<dbReference type="PhylomeDB" id="Q9BYQ7"/>
<dbReference type="TreeFam" id="TF351356"/>
<dbReference type="PathwayCommons" id="Q9BYQ7"/>
<dbReference type="Reactome" id="R-HSA-6805567">
    <property type="pathway name" value="Keratinization"/>
</dbReference>
<dbReference type="BioGRID-ORCS" id="85285">
    <property type="hits" value="7 hits in 214 CRISPR screens"/>
</dbReference>
<dbReference type="GenomeRNAi" id="85285"/>
<dbReference type="Pharos" id="Q9BYQ7">
    <property type="development level" value="Tdark"/>
</dbReference>
<dbReference type="PRO" id="PR:Q9BYQ7"/>
<dbReference type="Proteomes" id="UP000005640">
    <property type="component" value="Chromosome 17"/>
</dbReference>
<dbReference type="RNAct" id="Q9BYQ7">
    <property type="molecule type" value="protein"/>
</dbReference>
<dbReference type="Bgee" id="ENSG00000198443">
    <property type="expression patterns" value="Expressed in upper arm skin and 40 other cell types or tissues"/>
</dbReference>
<dbReference type="ExpressionAtlas" id="Q9BYQ7">
    <property type="expression patterns" value="baseline and differential"/>
</dbReference>
<dbReference type="GO" id="GO:0005829">
    <property type="term" value="C:cytosol"/>
    <property type="evidence" value="ECO:0000304"/>
    <property type="project" value="Reactome"/>
</dbReference>
<dbReference type="GO" id="GO:0045095">
    <property type="term" value="C:keratin filament"/>
    <property type="evidence" value="ECO:0007669"/>
    <property type="project" value="InterPro"/>
</dbReference>
<dbReference type="InterPro" id="IPR002494">
    <property type="entry name" value="KAP"/>
</dbReference>
<dbReference type="PANTHER" id="PTHR23262">
    <property type="entry name" value="KERATIN ASSOCIATED PROTEIN"/>
    <property type="match status" value="1"/>
</dbReference>
<dbReference type="PANTHER" id="PTHR23262:SF208">
    <property type="entry name" value="KERATIN-ASSOCIATED PROTEIN 4-1"/>
    <property type="match status" value="1"/>
</dbReference>
<dbReference type="Pfam" id="PF13885">
    <property type="entry name" value="Keratin_B2_2"/>
    <property type="match status" value="2"/>
</dbReference>
<proteinExistence type="evidence at protein level"/>
<gene>
    <name type="primary">KRTAP4-1</name>
    <name type="synonym">KAP4.10</name>
    <name type="synonym">KRTAP4-10</name>
    <name type="synonym">KRTAP4.1</name>
    <name type="synonym">KRTAP4.10</name>
</gene>
<feature type="chain" id="PRO_0000185177" description="Keratin-associated protein 4-1">
    <location>
        <begin position="1"/>
        <end position="146"/>
    </location>
</feature>
<feature type="repeat" description="1">
    <location>
        <begin position="5"/>
        <end position="9"/>
    </location>
</feature>
<feature type="repeat" description="2">
    <location>
        <begin position="24"/>
        <end position="28"/>
    </location>
</feature>
<feature type="repeat" description="3">
    <location>
        <begin position="29"/>
        <end position="33"/>
    </location>
</feature>
<feature type="repeat" description="4">
    <location>
        <begin position="34"/>
        <end position="38"/>
    </location>
</feature>
<feature type="repeat" description="5">
    <location>
        <begin position="44"/>
        <end position="48"/>
    </location>
</feature>
<feature type="repeat" description="6">
    <location>
        <begin position="54"/>
        <end position="58"/>
    </location>
</feature>
<feature type="repeat" description="7">
    <location>
        <begin position="59"/>
        <end position="63"/>
    </location>
</feature>
<feature type="repeat" description="8">
    <location>
        <begin position="64"/>
        <end position="68"/>
    </location>
</feature>
<feature type="repeat" description="9">
    <location>
        <begin position="69"/>
        <end position="73"/>
    </location>
</feature>
<feature type="repeat" description="10">
    <location>
        <begin position="83"/>
        <end position="87"/>
    </location>
</feature>
<feature type="repeat" description="11">
    <location>
        <begin position="88"/>
        <end position="92"/>
    </location>
</feature>
<feature type="repeat" description="12">
    <location>
        <begin position="102"/>
        <end position="106"/>
    </location>
</feature>
<feature type="repeat" description="13">
    <location>
        <begin position="107"/>
        <end position="111"/>
    </location>
</feature>
<feature type="repeat" description="14">
    <location>
        <begin position="121"/>
        <end position="125"/>
    </location>
</feature>
<feature type="repeat" description="15">
    <location>
        <begin position="126"/>
        <end position="130"/>
    </location>
</feature>
<feature type="repeat" description="16">
    <location>
        <begin position="131"/>
        <end position="135"/>
    </location>
</feature>
<feature type="repeat" description="17">
    <location>
        <begin position="136"/>
        <end position="140"/>
    </location>
</feature>
<feature type="repeat" description="18">
    <location>
        <begin position="141"/>
        <end position="145"/>
    </location>
</feature>
<feature type="region of interest" description="18 X 5 AA repeats of C-C-[GRQC]-[SPT]-[VSTL]">
    <location>
        <begin position="5"/>
        <end position="145"/>
    </location>
</feature>
<feature type="sequence variant" id="VAR_047044" description="In dbSNP:rs2320231." evidence="1 2 3">
    <original>H</original>
    <variation>R</variation>
    <location>
        <position position="66"/>
    </location>
</feature>
<feature type="sequence variant" id="VAR_064550" description="In allele KAP4.10." evidence="3">
    <location>
        <begin position="83"/>
        <end position="101"/>
    </location>
</feature>
<feature type="sequence variant" id="VAR_047045" description="In dbSNP:rs35382039." evidence="3">
    <original>S</original>
    <variation>R</variation>
    <location>
        <position position="115"/>
    </location>
</feature>
<feature type="sequence variant" id="VAR_047046" description="In dbSNP:rs398825." evidence="1 2 3">
    <original>A</original>
    <variation>T</variation>
    <location>
        <position position="134"/>
    </location>
</feature>
<sequence length="146" mass="15241">MVNSCCGSVCSDQGCDQGLCQETCCRPSCCQTTCCCPSCVVSSCCRPSCSQTTCCQTTCCRPSCCHPVCCQTTCRPSCGVSSCCRPLCCQTTCHPSCGMSSCCRPLCCQTTCRPSCGVSSCCRPLCCQTTCCRATCCRPSCCGSSC</sequence>
<keyword id="KW-0416">Keratin</keyword>
<keyword id="KW-1267">Proteomics identification</keyword>
<keyword id="KW-1185">Reference proteome</keyword>
<keyword id="KW-0677">Repeat</keyword>